<evidence type="ECO:0000255" key="1">
    <source>
        <dbReference type="HAMAP-Rule" id="MF_00093"/>
    </source>
</evidence>
<sequence length="359" mass="40630">MNIYDQLQAVEDRYEELGELLSDPDVVSDTKRFMELSKEEASNRDTVIAYREYKQVLQNIVDAEEMIKESGGDADLEEMAKQELKDAKAEKEEYEEKLKILLLPKDPNDDKNIILEIRGAAGGDEAALFAGDLLTMYQKYAEAQGWRFEVMEASMNGVGGFKEVVAMVSGQSVYSKLKYESGAHRVQRVPVTESQGRVHTSTATVLVMPEVEEVEYDIDPKDLRVDIYHASGAGGQNVNKVATAVRIVHLPTNIKVEMQEERTQQKNREKAMKIIRARVADHFAQIAQDEQDAERKSTIGTGDRSERIRTYNFPQNRVTDHRIGLTLQKLDTILSGKLDEVVDALVLYDQTQKLEELNK</sequence>
<proteinExistence type="inferred from homology"/>
<feature type="chain" id="PRO_1000193508" description="Peptide chain release factor 1">
    <location>
        <begin position="1"/>
        <end position="359"/>
    </location>
</feature>
<feature type="modified residue" description="N5-methylglutamine" evidence="1">
    <location>
        <position position="236"/>
    </location>
</feature>
<gene>
    <name evidence="1" type="primary">prfA</name>
    <name type="ordered locus">SPJ_0959</name>
</gene>
<keyword id="KW-0963">Cytoplasm</keyword>
<keyword id="KW-0488">Methylation</keyword>
<keyword id="KW-0648">Protein biosynthesis</keyword>
<dbReference type="EMBL" id="CP000919">
    <property type="protein sequence ID" value="ACO19533.1"/>
    <property type="molecule type" value="Genomic_DNA"/>
</dbReference>
<dbReference type="RefSeq" id="WP_001028801.1">
    <property type="nucleotide sequence ID" value="NC_012466.1"/>
</dbReference>
<dbReference type="SMR" id="C1CE12"/>
<dbReference type="GeneID" id="45653642"/>
<dbReference type="KEGG" id="sjj:SPJ_0959"/>
<dbReference type="HOGENOM" id="CLU_036856_0_1_9"/>
<dbReference type="Proteomes" id="UP000002206">
    <property type="component" value="Chromosome"/>
</dbReference>
<dbReference type="GO" id="GO:0005737">
    <property type="term" value="C:cytoplasm"/>
    <property type="evidence" value="ECO:0007669"/>
    <property type="project" value="UniProtKB-SubCell"/>
</dbReference>
<dbReference type="GO" id="GO:0016149">
    <property type="term" value="F:translation release factor activity, codon specific"/>
    <property type="evidence" value="ECO:0007669"/>
    <property type="project" value="UniProtKB-UniRule"/>
</dbReference>
<dbReference type="FunFam" id="3.30.160.20:FF:000027">
    <property type="entry name" value="Peptide chain release factor 1"/>
    <property type="match status" value="1"/>
</dbReference>
<dbReference type="FunFam" id="3.30.70.1660:FF:000002">
    <property type="entry name" value="Peptide chain release factor 1"/>
    <property type="match status" value="1"/>
</dbReference>
<dbReference type="FunFam" id="3.30.70.1660:FF:000004">
    <property type="entry name" value="Peptide chain release factor 1"/>
    <property type="match status" value="1"/>
</dbReference>
<dbReference type="Gene3D" id="3.30.160.20">
    <property type="match status" value="1"/>
</dbReference>
<dbReference type="Gene3D" id="3.30.70.1660">
    <property type="match status" value="2"/>
</dbReference>
<dbReference type="Gene3D" id="6.10.140.1950">
    <property type="match status" value="1"/>
</dbReference>
<dbReference type="HAMAP" id="MF_00093">
    <property type="entry name" value="Rel_fac_1"/>
    <property type="match status" value="1"/>
</dbReference>
<dbReference type="InterPro" id="IPR005139">
    <property type="entry name" value="PCRF"/>
</dbReference>
<dbReference type="InterPro" id="IPR000352">
    <property type="entry name" value="Pep_chain_release_fac_I"/>
</dbReference>
<dbReference type="InterPro" id="IPR045853">
    <property type="entry name" value="Pep_chain_release_fac_I_sf"/>
</dbReference>
<dbReference type="InterPro" id="IPR050057">
    <property type="entry name" value="Prokaryotic/Mito_RF"/>
</dbReference>
<dbReference type="InterPro" id="IPR004373">
    <property type="entry name" value="RF-1"/>
</dbReference>
<dbReference type="NCBIfam" id="TIGR00019">
    <property type="entry name" value="prfA"/>
    <property type="match status" value="1"/>
</dbReference>
<dbReference type="NCBIfam" id="NF001859">
    <property type="entry name" value="PRK00591.1"/>
    <property type="match status" value="1"/>
</dbReference>
<dbReference type="PANTHER" id="PTHR43804">
    <property type="entry name" value="LD18447P"/>
    <property type="match status" value="1"/>
</dbReference>
<dbReference type="PANTHER" id="PTHR43804:SF7">
    <property type="entry name" value="LD18447P"/>
    <property type="match status" value="1"/>
</dbReference>
<dbReference type="Pfam" id="PF03462">
    <property type="entry name" value="PCRF"/>
    <property type="match status" value="1"/>
</dbReference>
<dbReference type="Pfam" id="PF00472">
    <property type="entry name" value="RF-1"/>
    <property type="match status" value="1"/>
</dbReference>
<dbReference type="SMART" id="SM00937">
    <property type="entry name" value="PCRF"/>
    <property type="match status" value="1"/>
</dbReference>
<dbReference type="SUPFAM" id="SSF75620">
    <property type="entry name" value="Release factor"/>
    <property type="match status" value="1"/>
</dbReference>
<dbReference type="PROSITE" id="PS00745">
    <property type="entry name" value="RF_PROK_I"/>
    <property type="match status" value="1"/>
</dbReference>
<protein>
    <recommendedName>
        <fullName evidence="1">Peptide chain release factor 1</fullName>
        <shortName evidence="1">RF-1</shortName>
    </recommendedName>
</protein>
<organism>
    <name type="scientific">Streptococcus pneumoniae (strain JJA)</name>
    <dbReference type="NCBI Taxonomy" id="488222"/>
    <lineage>
        <taxon>Bacteria</taxon>
        <taxon>Bacillati</taxon>
        <taxon>Bacillota</taxon>
        <taxon>Bacilli</taxon>
        <taxon>Lactobacillales</taxon>
        <taxon>Streptococcaceae</taxon>
        <taxon>Streptococcus</taxon>
    </lineage>
</organism>
<reference key="1">
    <citation type="journal article" date="2010" name="Genome Biol.">
        <title>Structure and dynamics of the pan-genome of Streptococcus pneumoniae and closely related species.</title>
        <authorList>
            <person name="Donati C."/>
            <person name="Hiller N.L."/>
            <person name="Tettelin H."/>
            <person name="Muzzi A."/>
            <person name="Croucher N.J."/>
            <person name="Angiuoli S.V."/>
            <person name="Oggioni M."/>
            <person name="Dunning Hotopp J.C."/>
            <person name="Hu F.Z."/>
            <person name="Riley D.R."/>
            <person name="Covacci A."/>
            <person name="Mitchell T.J."/>
            <person name="Bentley S.D."/>
            <person name="Kilian M."/>
            <person name="Ehrlich G.D."/>
            <person name="Rappuoli R."/>
            <person name="Moxon E.R."/>
            <person name="Masignani V."/>
        </authorList>
    </citation>
    <scope>NUCLEOTIDE SEQUENCE [LARGE SCALE GENOMIC DNA]</scope>
    <source>
        <strain>JJA</strain>
    </source>
</reference>
<comment type="function">
    <text evidence="1">Peptide chain release factor 1 directs the termination of translation in response to the peptide chain termination codons UAG and UAA.</text>
</comment>
<comment type="subcellular location">
    <subcellularLocation>
        <location evidence="1">Cytoplasm</location>
    </subcellularLocation>
</comment>
<comment type="PTM">
    <text evidence="1">Methylated by PrmC. Methylation increases the termination efficiency of RF1.</text>
</comment>
<comment type="similarity">
    <text evidence="1">Belongs to the prokaryotic/mitochondrial release factor family.</text>
</comment>
<accession>C1CE12</accession>
<name>RF1_STRZJ</name>